<keyword id="KW-0963">Cytoplasm</keyword>
<keyword id="KW-0342">GTP-binding</keyword>
<keyword id="KW-0378">Hydrolase</keyword>
<keyword id="KW-0479">Metal-binding</keyword>
<keyword id="KW-0547">Nucleotide-binding</keyword>
<keyword id="KW-0690">Ribosome biogenesis</keyword>
<keyword id="KW-0694">RNA-binding</keyword>
<keyword id="KW-0699">rRNA-binding</keyword>
<keyword id="KW-0862">Zinc</keyword>
<organism>
    <name type="scientific">Histophilus somni (strain 2336)</name>
    <name type="common">Haemophilus somnus</name>
    <dbReference type="NCBI Taxonomy" id="228400"/>
    <lineage>
        <taxon>Bacteria</taxon>
        <taxon>Pseudomonadati</taxon>
        <taxon>Pseudomonadota</taxon>
        <taxon>Gammaproteobacteria</taxon>
        <taxon>Pasteurellales</taxon>
        <taxon>Pasteurellaceae</taxon>
        <taxon>Histophilus</taxon>
    </lineage>
</organism>
<gene>
    <name evidence="1" type="primary">rsgA</name>
    <name type="ordered locus">HSM_1008</name>
</gene>
<feature type="chain" id="PRO_1000188086" description="Small ribosomal subunit biogenesis GTPase RsgA">
    <location>
        <begin position="1"/>
        <end position="350"/>
    </location>
</feature>
<feature type="domain" description="CP-type G" evidence="2">
    <location>
        <begin position="106"/>
        <end position="274"/>
    </location>
</feature>
<feature type="region of interest" description="Disordered" evidence="3">
    <location>
        <begin position="1"/>
        <end position="30"/>
    </location>
</feature>
<feature type="compositionally biased region" description="Polar residues" evidence="3">
    <location>
        <begin position="7"/>
        <end position="20"/>
    </location>
</feature>
<feature type="compositionally biased region" description="Basic residues" evidence="3">
    <location>
        <begin position="21"/>
        <end position="30"/>
    </location>
</feature>
<feature type="binding site" evidence="1">
    <location>
        <begin position="162"/>
        <end position="165"/>
    </location>
    <ligand>
        <name>GTP</name>
        <dbReference type="ChEBI" id="CHEBI:37565"/>
    </ligand>
</feature>
<feature type="binding site" evidence="1">
    <location>
        <begin position="216"/>
        <end position="224"/>
    </location>
    <ligand>
        <name>GTP</name>
        <dbReference type="ChEBI" id="CHEBI:37565"/>
    </ligand>
</feature>
<feature type="binding site" evidence="1">
    <location>
        <position position="298"/>
    </location>
    <ligand>
        <name>Zn(2+)</name>
        <dbReference type="ChEBI" id="CHEBI:29105"/>
    </ligand>
</feature>
<feature type="binding site" evidence="1">
    <location>
        <position position="303"/>
    </location>
    <ligand>
        <name>Zn(2+)</name>
        <dbReference type="ChEBI" id="CHEBI:29105"/>
    </ligand>
</feature>
<feature type="binding site" evidence="1">
    <location>
        <position position="305"/>
    </location>
    <ligand>
        <name>Zn(2+)</name>
        <dbReference type="ChEBI" id="CHEBI:29105"/>
    </ligand>
</feature>
<feature type="binding site" evidence="1">
    <location>
        <position position="311"/>
    </location>
    <ligand>
        <name>Zn(2+)</name>
        <dbReference type="ChEBI" id="CHEBI:29105"/>
    </ligand>
</feature>
<name>RSGA_HISS2</name>
<reference key="1">
    <citation type="submission" date="2008-02" db="EMBL/GenBank/DDBJ databases">
        <title>Complete sequence of Haemophilus somnus 2336.</title>
        <authorList>
            <consortium name="US DOE Joint Genome Institute"/>
            <person name="Siddaramappa S."/>
            <person name="Duncan A.J."/>
            <person name="Challacombe J.F."/>
            <person name="Rainey D."/>
            <person name="Gillaspy A.F."/>
            <person name="Carson M."/>
            <person name="Gipson J."/>
            <person name="Gipson M."/>
            <person name="Bruce D."/>
            <person name="Detter J.C."/>
            <person name="Han C.S."/>
            <person name="Land M."/>
            <person name="Tapia R."/>
            <person name="Thompson L.S."/>
            <person name="Orvis J."/>
            <person name="Zaitshik J."/>
            <person name="Barnes G."/>
            <person name="Brettin T.S."/>
            <person name="Dyer D.W."/>
            <person name="Inzana T.J."/>
        </authorList>
    </citation>
    <scope>NUCLEOTIDE SEQUENCE [LARGE SCALE GENOMIC DNA]</scope>
    <source>
        <strain>2336</strain>
    </source>
</reference>
<sequence>MSKRKLTQNQQRRIQSNNAKTLHRHQHRHKSDIDWQDDMLGDFQDGTVVTRYAVHADVENEQGEIIRCNLRRTLKSVVVGDRVVWRKGKEQLQGVRGVIEAVQPRHNQIVRPDYYDGLKPIAANIDRIIIVSAVLPNLSLNIIDRYLVVCESSNIPAVIVVNKADLLSSEARIEVGLQLEIYRKIGYETLLISAKSGENMEKLTALLSEGTSIFVGQSGVGKSSLINYILPEVNAQTGKLSQVSGLGQHTTTSSRLYHLSQGGNLIDSPGIREFGLWHLDREQITNGYREFQYFLGTCKFRDCKHLHDPGCAIQLAVKEGKIDPLRFENYHRLITSLSETKSQRHFISAN</sequence>
<accession>B0UT89</accession>
<dbReference type="EC" id="3.6.1.-" evidence="1"/>
<dbReference type="EMBL" id="CP000947">
    <property type="protein sequence ID" value="ACA30718.1"/>
    <property type="molecule type" value="Genomic_DNA"/>
</dbReference>
<dbReference type="RefSeq" id="WP_012340206.1">
    <property type="nucleotide sequence ID" value="NC_010519.1"/>
</dbReference>
<dbReference type="SMR" id="B0UT89"/>
<dbReference type="STRING" id="228400.HSM_1008"/>
<dbReference type="GeneID" id="31487307"/>
<dbReference type="KEGG" id="hsm:HSM_1008"/>
<dbReference type="HOGENOM" id="CLU_033617_2_0_6"/>
<dbReference type="GO" id="GO:0005737">
    <property type="term" value="C:cytoplasm"/>
    <property type="evidence" value="ECO:0007669"/>
    <property type="project" value="UniProtKB-SubCell"/>
</dbReference>
<dbReference type="GO" id="GO:0005525">
    <property type="term" value="F:GTP binding"/>
    <property type="evidence" value="ECO:0007669"/>
    <property type="project" value="UniProtKB-UniRule"/>
</dbReference>
<dbReference type="GO" id="GO:0003924">
    <property type="term" value="F:GTPase activity"/>
    <property type="evidence" value="ECO:0007669"/>
    <property type="project" value="UniProtKB-UniRule"/>
</dbReference>
<dbReference type="GO" id="GO:0046872">
    <property type="term" value="F:metal ion binding"/>
    <property type="evidence" value="ECO:0007669"/>
    <property type="project" value="UniProtKB-KW"/>
</dbReference>
<dbReference type="GO" id="GO:0019843">
    <property type="term" value="F:rRNA binding"/>
    <property type="evidence" value="ECO:0007669"/>
    <property type="project" value="UniProtKB-KW"/>
</dbReference>
<dbReference type="GO" id="GO:0042274">
    <property type="term" value="P:ribosomal small subunit biogenesis"/>
    <property type="evidence" value="ECO:0007669"/>
    <property type="project" value="UniProtKB-UniRule"/>
</dbReference>
<dbReference type="CDD" id="cd01854">
    <property type="entry name" value="YjeQ_EngC"/>
    <property type="match status" value="1"/>
</dbReference>
<dbReference type="Gene3D" id="2.40.50.140">
    <property type="entry name" value="Nucleic acid-binding proteins"/>
    <property type="match status" value="1"/>
</dbReference>
<dbReference type="Gene3D" id="3.40.50.300">
    <property type="entry name" value="P-loop containing nucleotide triphosphate hydrolases"/>
    <property type="match status" value="1"/>
</dbReference>
<dbReference type="Gene3D" id="1.10.40.50">
    <property type="entry name" value="Probable gtpase engc, domain 3"/>
    <property type="match status" value="1"/>
</dbReference>
<dbReference type="HAMAP" id="MF_01820">
    <property type="entry name" value="GTPase_RsgA"/>
    <property type="match status" value="1"/>
</dbReference>
<dbReference type="InterPro" id="IPR030378">
    <property type="entry name" value="G_CP_dom"/>
</dbReference>
<dbReference type="InterPro" id="IPR012340">
    <property type="entry name" value="NA-bd_OB-fold"/>
</dbReference>
<dbReference type="InterPro" id="IPR027417">
    <property type="entry name" value="P-loop_NTPase"/>
</dbReference>
<dbReference type="InterPro" id="IPR004881">
    <property type="entry name" value="Ribosome_biogen_GTPase_RsgA"/>
</dbReference>
<dbReference type="InterPro" id="IPR010914">
    <property type="entry name" value="RsgA_GTPase_dom"/>
</dbReference>
<dbReference type="NCBIfam" id="NF008931">
    <property type="entry name" value="PRK12288.1"/>
    <property type="match status" value="1"/>
</dbReference>
<dbReference type="NCBIfam" id="TIGR00157">
    <property type="entry name" value="ribosome small subunit-dependent GTPase A"/>
    <property type="match status" value="1"/>
</dbReference>
<dbReference type="PANTHER" id="PTHR32120">
    <property type="entry name" value="SMALL RIBOSOMAL SUBUNIT BIOGENESIS GTPASE RSGA"/>
    <property type="match status" value="1"/>
</dbReference>
<dbReference type="PANTHER" id="PTHR32120:SF11">
    <property type="entry name" value="SMALL RIBOSOMAL SUBUNIT BIOGENESIS GTPASE RSGA 1, MITOCHONDRIAL-RELATED"/>
    <property type="match status" value="1"/>
</dbReference>
<dbReference type="Pfam" id="PF03193">
    <property type="entry name" value="RsgA_GTPase"/>
    <property type="match status" value="1"/>
</dbReference>
<dbReference type="SUPFAM" id="SSF52540">
    <property type="entry name" value="P-loop containing nucleoside triphosphate hydrolases"/>
    <property type="match status" value="1"/>
</dbReference>
<dbReference type="PROSITE" id="PS50936">
    <property type="entry name" value="ENGC_GTPASE"/>
    <property type="match status" value="1"/>
</dbReference>
<dbReference type="PROSITE" id="PS51721">
    <property type="entry name" value="G_CP"/>
    <property type="match status" value="1"/>
</dbReference>
<comment type="function">
    <text evidence="1">One of several proteins that assist in the late maturation steps of the functional core of the 30S ribosomal subunit. Helps release RbfA from mature subunits. May play a role in the assembly of ribosomal proteins into the subunit. Circularly permuted GTPase that catalyzes slow GTP hydrolysis, GTPase activity is stimulated by the 30S ribosomal subunit.</text>
</comment>
<comment type="cofactor">
    <cofactor evidence="1">
        <name>Zn(2+)</name>
        <dbReference type="ChEBI" id="CHEBI:29105"/>
    </cofactor>
    <text evidence="1">Binds 1 zinc ion per subunit.</text>
</comment>
<comment type="subunit">
    <text evidence="1">Monomer. Associates with 30S ribosomal subunit, binds 16S rRNA.</text>
</comment>
<comment type="subcellular location">
    <subcellularLocation>
        <location evidence="1">Cytoplasm</location>
    </subcellularLocation>
</comment>
<comment type="similarity">
    <text evidence="1">Belongs to the TRAFAC class YlqF/YawG GTPase family. RsgA subfamily.</text>
</comment>
<protein>
    <recommendedName>
        <fullName evidence="1">Small ribosomal subunit biogenesis GTPase RsgA</fullName>
        <ecNumber evidence="1">3.6.1.-</ecNumber>
    </recommendedName>
</protein>
<proteinExistence type="inferred from homology"/>
<evidence type="ECO:0000255" key="1">
    <source>
        <dbReference type="HAMAP-Rule" id="MF_01820"/>
    </source>
</evidence>
<evidence type="ECO:0000255" key="2">
    <source>
        <dbReference type="PROSITE-ProRule" id="PRU01058"/>
    </source>
</evidence>
<evidence type="ECO:0000256" key="3">
    <source>
        <dbReference type="SAM" id="MobiDB-lite"/>
    </source>
</evidence>